<accession>Q96PQ5</accession>
<sequence>MAASTASQRPLKGILKDNTSTTSSMVASAEHPRGSVHEQLSKKSQKWDEMNILATYRPADKDYGLMKIDEPSTPYHSTMGDDEDACSDTETTEAMATDSLAKNLAAAEGLEPKYQVQEQESSGEEDSDLSPEEREKKRQFEMRRTLHYNEGLNIKLARQLISKDLHDDDKVEEMLETAHGESMNTEESNQGSTASDQQQNKSRSS</sequence>
<proteinExistence type="uncertain"/>
<keyword id="KW-0119">Carbohydrate metabolism</keyword>
<keyword id="KW-0321">Glycogen metabolism</keyword>
<keyword id="KW-0597">Phosphoprotein</keyword>
<keyword id="KW-0650">Protein phosphatase inhibitor</keyword>
<keyword id="KW-1267">Proteomics identification</keyword>
<keyword id="KW-1185">Reference proteome</keyword>
<reference key="1">
    <citation type="journal article" date="2001" name="DNA Seq.">
        <title>Cloning of a cDNA encoding an isoform of human protein phosphatase inhibitor 2 from vascularized breast tumor.</title>
        <authorList>
            <person name="Wu I."/>
            <person name="Moses M.A."/>
        </authorList>
    </citation>
    <scope>NUCLEOTIDE SEQUENCE [MRNA]</scope>
</reference>
<feature type="chain" id="PRO_0000286137" description="Putative protein phosphatase inhibitor 2-like protein 1">
    <location>
        <begin position="1"/>
        <end position="205"/>
    </location>
</feature>
<feature type="region of interest" description="Disordered" evidence="2">
    <location>
        <begin position="1"/>
        <end position="44"/>
    </location>
</feature>
<feature type="region of interest" description="Required for binding PPP1CC" evidence="1">
    <location>
        <begin position="12"/>
        <end position="17"/>
    </location>
</feature>
<feature type="region of interest" description="Required for binding PPP1CC" evidence="1">
    <location>
        <begin position="43"/>
        <end position="55"/>
    </location>
</feature>
<feature type="region of interest" description="Disordered" evidence="2">
    <location>
        <begin position="64"/>
        <end position="92"/>
    </location>
</feature>
<feature type="region of interest" description="Disordered" evidence="2">
    <location>
        <begin position="107"/>
        <end position="148"/>
    </location>
</feature>
<feature type="region of interest" description="Required for binding PPP1CC catalytic center, displacing metal ions and inhibition of PPP1CC catalytic activity" evidence="1">
    <location>
        <begin position="147"/>
        <end position="150"/>
    </location>
</feature>
<feature type="region of interest" description="Disordered" evidence="2">
    <location>
        <begin position="171"/>
        <end position="205"/>
    </location>
</feature>
<feature type="compositionally biased region" description="Polar residues" evidence="2">
    <location>
        <begin position="17"/>
        <end position="26"/>
    </location>
</feature>
<feature type="compositionally biased region" description="Basic and acidic residues" evidence="2">
    <location>
        <begin position="30"/>
        <end position="44"/>
    </location>
</feature>
<feature type="compositionally biased region" description="Acidic residues" evidence="2">
    <location>
        <begin position="80"/>
        <end position="91"/>
    </location>
</feature>
<feature type="compositionally biased region" description="Acidic residues" evidence="2">
    <location>
        <begin position="121"/>
        <end position="130"/>
    </location>
</feature>
<feature type="compositionally biased region" description="Basic and acidic residues" evidence="2">
    <location>
        <begin position="131"/>
        <end position="144"/>
    </location>
</feature>
<feature type="compositionally biased region" description="Polar residues" evidence="2">
    <location>
        <begin position="182"/>
        <end position="205"/>
    </location>
</feature>
<feature type="modified residue" description="Phosphothreonine; by GSK3" evidence="1">
    <location>
        <position position="73"/>
    </location>
</feature>
<feature type="modified residue" description="Phosphoserine; by CK2" evidence="1">
    <location>
        <position position="87"/>
    </location>
</feature>
<protein>
    <recommendedName>
        <fullName>Putative protein phosphatase inhibitor 2-like protein 1</fullName>
    </recommendedName>
    <alternativeName>
        <fullName>Protein phosphatase 1, regulatory subunit 2 pseudogene 1</fullName>
    </alternativeName>
</protein>
<organism>
    <name type="scientific">Homo sapiens</name>
    <name type="common">Human</name>
    <dbReference type="NCBI Taxonomy" id="9606"/>
    <lineage>
        <taxon>Eukaryota</taxon>
        <taxon>Metazoa</taxon>
        <taxon>Chordata</taxon>
        <taxon>Craniata</taxon>
        <taxon>Vertebrata</taxon>
        <taxon>Euteleostomi</taxon>
        <taxon>Mammalia</taxon>
        <taxon>Eutheria</taxon>
        <taxon>Euarchontoglires</taxon>
        <taxon>Primates</taxon>
        <taxon>Haplorrhini</taxon>
        <taxon>Catarrhini</taxon>
        <taxon>Hominidae</taxon>
        <taxon>Homo</taxon>
    </lineage>
</organism>
<comment type="function">
    <text evidence="1">Inhibitor of protein-phosphatase 1.</text>
</comment>
<comment type="similarity">
    <text evidence="3">Belongs to the protein phosphatase inhibitor 2 family.</text>
</comment>
<comment type="caution">
    <text evidence="3">Could be the product of a pseudogene.</text>
</comment>
<gene>
    <name type="primary">PPP1R2P1</name>
</gene>
<dbReference type="EMBL" id="AF275684">
    <property type="protein sequence ID" value="AAL09300.1"/>
    <property type="molecule type" value="mRNA"/>
</dbReference>
<dbReference type="FunCoup" id="Q96PQ5">
    <property type="interactions" value="54"/>
</dbReference>
<dbReference type="GlyGen" id="Q96PQ5">
    <property type="glycosylation" value="2 sites, 1 N-linked glycan (1 site), 1 O-linked glycan (1 site)"/>
</dbReference>
<dbReference type="iPTMnet" id="Q96PQ5"/>
<dbReference type="PhosphoSitePlus" id="Q96PQ5"/>
<dbReference type="BioMuta" id="HGNC:9289"/>
<dbReference type="jPOST" id="Q96PQ5"/>
<dbReference type="MassIVE" id="Q96PQ5"/>
<dbReference type="ProteomicsDB" id="77730"/>
<dbReference type="AGR" id="HGNC:9289"/>
<dbReference type="GeneCards" id="PPP1R2P1"/>
<dbReference type="HGNC" id="HGNC:9289">
    <property type="gene designation" value="PPP1R2P1"/>
</dbReference>
<dbReference type="neXtProt" id="NX_Q96PQ5"/>
<dbReference type="InParanoid" id="Q96PQ5"/>
<dbReference type="PAN-GO" id="Q96PQ5">
    <property type="GO annotations" value="2 GO annotations based on evolutionary models"/>
</dbReference>
<dbReference type="PhylomeDB" id="Q96PQ5"/>
<dbReference type="Pharos" id="Q96PQ5">
    <property type="development level" value="Tdark"/>
</dbReference>
<dbReference type="Proteomes" id="UP000005640">
    <property type="component" value="Unplaced"/>
</dbReference>
<dbReference type="RNAct" id="Q96PQ5">
    <property type="molecule type" value="protein"/>
</dbReference>
<dbReference type="GO" id="GO:0004864">
    <property type="term" value="F:protein phosphatase inhibitor activity"/>
    <property type="evidence" value="ECO:0000318"/>
    <property type="project" value="GO_Central"/>
</dbReference>
<dbReference type="GO" id="GO:0005977">
    <property type="term" value="P:glycogen metabolic process"/>
    <property type="evidence" value="ECO:0007669"/>
    <property type="project" value="UniProtKB-KW"/>
</dbReference>
<dbReference type="GO" id="GO:0035556">
    <property type="term" value="P:intracellular signal transduction"/>
    <property type="evidence" value="ECO:0000318"/>
    <property type="project" value="GO_Central"/>
</dbReference>
<dbReference type="GO" id="GO:0009966">
    <property type="term" value="P:regulation of signal transduction"/>
    <property type="evidence" value="ECO:0007669"/>
    <property type="project" value="InterPro"/>
</dbReference>
<dbReference type="Gene3D" id="6.10.250.1050">
    <property type="match status" value="2"/>
</dbReference>
<dbReference type="InterPro" id="IPR007062">
    <property type="entry name" value="PPI-2"/>
</dbReference>
<dbReference type="PANTHER" id="PTHR12398">
    <property type="entry name" value="PROTEIN PHOSPHATASE INHIBITOR"/>
    <property type="match status" value="1"/>
</dbReference>
<dbReference type="PANTHER" id="PTHR12398:SF35">
    <property type="entry name" value="PROTEIN PHOSPHATASE INHIBITOR 2-RELATED"/>
    <property type="match status" value="1"/>
</dbReference>
<dbReference type="Pfam" id="PF04979">
    <property type="entry name" value="IPP-2"/>
    <property type="match status" value="1"/>
</dbReference>
<name>IPP2L_HUMAN</name>
<evidence type="ECO:0000250" key="1"/>
<evidence type="ECO:0000256" key="2">
    <source>
        <dbReference type="SAM" id="MobiDB-lite"/>
    </source>
</evidence>
<evidence type="ECO:0000305" key="3"/>